<evidence type="ECO:0000250" key="1"/>
<evidence type="ECO:0000255" key="2">
    <source>
        <dbReference type="PROSITE-ProRule" id="PRU00057"/>
    </source>
</evidence>
<evidence type="ECO:0000305" key="3"/>
<proteinExistence type="inferred from homology"/>
<feature type="chain" id="PRO_0000334635" description="CDC42 small effector protein 1-A">
    <location>
        <begin position="1"/>
        <end position="79"/>
    </location>
</feature>
<feature type="domain" description="CRIB" evidence="2">
    <location>
        <begin position="30"/>
        <end position="43"/>
    </location>
</feature>
<feature type="lipid moiety-binding region" description="S-palmitoyl cysteine" evidence="1">
    <location>
        <position position="10"/>
    </location>
</feature>
<feature type="lipid moiety-binding region" description="S-palmitoyl cysteine" evidence="1">
    <location>
        <position position="11"/>
    </location>
</feature>
<name>C4S1A_XENLA</name>
<keyword id="KW-1003">Cell membrane</keyword>
<keyword id="KW-0133">Cell shape</keyword>
<keyword id="KW-0963">Cytoplasm</keyword>
<keyword id="KW-0206">Cytoskeleton</keyword>
<keyword id="KW-0449">Lipoprotein</keyword>
<keyword id="KW-0472">Membrane</keyword>
<keyword id="KW-0564">Palmitate</keyword>
<keyword id="KW-1185">Reference proteome</keyword>
<protein>
    <recommendedName>
        <fullName>CDC42 small effector protein 1-A</fullName>
    </recommendedName>
</protein>
<gene>
    <name type="primary">cdc42se1-a</name>
</gene>
<comment type="function">
    <text evidence="1">Probably involved in the organization of the actin cytoskeleton by acting downstream of CDC42, inducing actin filament assembly.</text>
</comment>
<comment type="subcellular location">
    <subcellularLocation>
        <location evidence="1">Cytoplasm</location>
        <location evidence="1">Cytoskeleton</location>
    </subcellularLocation>
    <subcellularLocation>
        <location evidence="1">Cell membrane</location>
        <topology evidence="1">Lipid-anchor</topology>
    </subcellularLocation>
</comment>
<comment type="similarity">
    <text evidence="3">Belongs to the CDC42SE/SPEC family.</text>
</comment>
<dbReference type="EMBL" id="BC078508">
    <property type="protein sequence ID" value="AAH78508.1"/>
    <property type="molecule type" value="mRNA"/>
</dbReference>
<dbReference type="RefSeq" id="NP_001087282.1">
    <property type="nucleotide sequence ID" value="NM_001093813.2"/>
</dbReference>
<dbReference type="RefSeq" id="XP_018087521.1">
    <property type="nucleotide sequence ID" value="XM_018232032.1"/>
</dbReference>
<dbReference type="DNASU" id="447104"/>
<dbReference type="GeneID" id="447104"/>
<dbReference type="KEGG" id="xla:447104"/>
<dbReference type="AGR" id="Xenbase:XB-GENE-6254352"/>
<dbReference type="CTD" id="447104"/>
<dbReference type="Xenbase" id="XB-GENE-6254352">
    <property type="gene designation" value="cdc42se1.S"/>
</dbReference>
<dbReference type="OMA" id="DRPWNNS"/>
<dbReference type="OrthoDB" id="5559822at2759"/>
<dbReference type="Proteomes" id="UP000186698">
    <property type="component" value="Chromosome 8S"/>
</dbReference>
<dbReference type="Bgee" id="447104">
    <property type="expression patterns" value="Expressed in zone of skin and 19 other cell types or tissues"/>
</dbReference>
<dbReference type="GO" id="GO:0005737">
    <property type="term" value="C:cytoplasm"/>
    <property type="evidence" value="ECO:0007669"/>
    <property type="project" value="UniProtKB-KW"/>
</dbReference>
<dbReference type="GO" id="GO:0005856">
    <property type="term" value="C:cytoskeleton"/>
    <property type="evidence" value="ECO:0007669"/>
    <property type="project" value="UniProtKB-SubCell"/>
</dbReference>
<dbReference type="GO" id="GO:0005886">
    <property type="term" value="C:plasma membrane"/>
    <property type="evidence" value="ECO:0000318"/>
    <property type="project" value="GO_Central"/>
</dbReference>
<dbReference type="GO" id="GO:0031267">
    <property type="term" value="F:small GTPase binding"/>
    <property type="evidence" value="ECO:0007669"/>
    <property type="project" value="InterPro"/>
</dbReference>
<dbReference type="GO" id="GO:0008360">
    <property type="term" value="P:regulation of cell shape"/>
    <property type="evidence" value="ECO:0007669"/>
    <property type="project" value="UniProtKB-KW"/>
</dbReference>
<dbReference type="GO" id="GO:0035023">
    <property type="term" value="P:regulation of Rho protein signal transduction"/>
    <property type="evidence" value="ECO:0007669"/>
    <property type="project" value="InterPro"/>
</dbReference>
<dbReference type="FunFam" id="3.90.810.10:FF:000015">
    <property type="entry name" value="CDC42 small effector protein 1"/>
    <property type="match status" value="1"/>
</dbReference>
<dbReference type="Gene3D" id="3.90.810.10">
    <property type="entry name" value="CRIB domain"/>
    <property type="match status" value="1"/>
</dbReference>
<dbReference type="InterPro" id="IPR000095">
    <property type="entry name" value="CRIB_dom"/>
</dbReference>
<dbReference type="InterPro" id="IPR036936">
    <property type="entry name" value="CRIB_dom_sf"/>
</dbReference>
<dbReference type="InterPro" id="IPR039056">
    <property type="entry name" value="SPEC"/>
</dbReference>
<dbReference type="PANTHER" id="PTHR13502:SF3">
    <property type="entry name" value="CDC42 SMALL EFFECTOR PROTEIN 1"/>
    <property type="match status" value="1"/>
</dbReference>
<dbReference type="PANTHER" id="PTHR13502">
    <property type="entry name" value="CDC42 SMALL EFFECTOR PROTEIN HOMOLOG"/>
    <property type="match status" value="1"/>
</dbReference>
<dbReference type="Pfam" id="PF00786">
    <property type="entry name" value="PBD"/>
    <property type="match status" value="1"/>
</dbReference>
<dbReference type="PROSITE" id="PS50108">
    <property type="entry name" value="CRIB"/>
    <property type="match status" value="1"/>
</dbReference>
<sequence length="79" mass="8928">MSDFWHKLGCCVVEKPQPKKKRKRIDRSMIGEPMNFVHLTHVGSGDMGAGDGLPMAGTVQQQMRSKCGRDRQWSNSRVL</sequence>
<reference key="1">
    <citation type="submission" date="2004-07" db="EMBL/GenBank/DDBJ databases">
        <authorList>
            <consortium name="NIH - Xenopus Gene Collection (XGC) project"/>
        </authorList>
    </citation>
    <scope>NUCLEOTIDE SEQUENCE [LARGE SCALE MRNA]</scope>
</reference>
<organism>
    <name type="scientific">Xenopus laevis</name>
    <name type="common">African clawed frog</name>
    <dbReference type="NCBI Taxonomy" id="8355"/>
    <lineage>
        <taxon>Eukaryota</taxon>
        <taxon>Metazoa</taxon>
        <taxon>Chordata</taxon>
        <taxon>Craniata</taxon>
        <taxon>Vertebrata</taxon>
        <taxon>Euteleostomi</taxon>
        <taxon>Amphibia</taxon>
        <taxon>Batrachia</taxon>
        <taxon>Anura</taxon>
        <taxon>Pipoidea</taxon>
        <taxon>Pipidae</taxon>
        <taxon>Xenopodinae</taxon>
        <taxon>Xenopus</taxon>
        <taxon>Xenopus</taxon>
    </lineage>
</organism>
<accession>Q66KZ1</accession>